<comment type="catalytic activity">
    <reaction evidence="1">
        <text>2-formamido-N(1)-(5-O-phospho-beta-D-ribosyl)acetamidine + ATP = 5-amino-1-(5-phospho-beta-D-ribosyl)imidazole + ADP + phosphate + H(+)</text>
        <dbReference type="Rhea" id="RHEA:23032"/>
        <dbReference type="ChEBI" id="CHEBI:15378"/>
        <dbReference type="ChEBI" id="CHEBI:30616"/>
        <dbReference type="ChEBI" id="CHEBI:43474"/>
        <dbReference type="ChEBI" id="CHEBI:137981"/>
        <dbReference type="ChEBI" id="CHEBI:147287"/>
        <dbReference type="ChEBI" id="CHEBI:456216"/>
        <dbReference type="EC" id="6.3.3.1"/>
    </reaction>
</comment>
<comment type="pathway">
    <text evidence="1">Purine metabolism; IMP biosynthesis via de novo pathway; 5-amino-1-(5-phospho-D-ribosyl)imidazole from N(2)-formyl-N(1)-(5-phospho-D-ribosyl)glycinamide: step 2/2.</text>
</comment>
<comment type="subcellular location">
    <subcellularLocation>
        <location evidence="1">Cytoplasm</location>
    </subcellularLocation>
</comment>
<comment type="similarity">
    <text evidence="1">Belongs to the AIR synthase family.</text>
</comment>
<protein>
    <recommendedName>
        <fullName evidence="1">Phosphoribosylformylglycinamidine cyclo-ligase</fullName>
        <ecNumber evidence="1">6.3.3.1</ecNumber>
    </recommendedName>
    <alternativeName>
        <fullName evidence="1">AIR synthase</fullName>
    </alternativeName>
    <alternativeName>
        <fullName evidence="1">AIRS</fullName>
    </alternativeName>
    <alternativeName>
        <fullName evidence="1">Phosphoribosyl-aminoimidazole synthetase</fullName>
    </alternativeName>
</protein>
<organism>
    <name type="scientific">Laribacter hongkongensis (strain HLHK9)</name>
    <dbReference type="NCBI Taxonomy" id="557598"/>
    <lineage>
        <taxon>Bacteria</taxon>
        <taxon>Pseudomonadati</taxon>
        <taxon>Pseudomonadota</taxon>
        <taxon>Betaproteobacteria</taxon>
        <taxon>Neisseriales</taxon>
        <taxon>Aquaspirillaceae</taxon>
        <taxon>Laribacter</taxon>
    </lineage>
</organism>
<sequence length="344" mass="36706">MTQSLSYRDAGVDIDAGDQLVENIKPFAKRTMRPEVLGGLGGFGALVEISKKYREPVLVSGTDGVGTKLKLAFDWNRHDTVGIDLVAMSVNDILVQGAEPLFFLDYFACGKLDVAQATDVIKGIAEGCEQAGCALIGGETAEMPGMYPVGEYDLAGFAVGVVEKSQVITGRDIRPGDVVLGLGSNGVHSNGFSLVRKIIERAGPDLDAPFDGDRTLRDAIIAPTRIYVKPLLKLMAGVPVKGMAHITGGGITENTPRVLPDNCVAQIDAASWTLPKLFQWLQQEGNVDAQEMYRTFNCGIGMVVIVAPEQADAATALLTAEGETVHRLGLVRARQGDEHQTQIA</sequence>
<feature type="chain" id="PRO_1000212826" description="Phosphoribosylformylglycinamidine cyclo-ligase">
    <location>
        <begin position="1"/>
        <end position="344"/>
    </location>
</feature>
<dbReference type="EC" id="6.3.3.1" evidence="1"/>
<dbReference type="EMBL" id="CP001154">
    <property type="protein sequence ID" value="ACO73501.1"/>
    <property type="molecule type" value="Genomic_DNA"/>
</dbReference>
<dbReference type="RefSeq" id="WP_012695993.1">
    <property type="nucleotide sequence ID" value="NC_012559.1"/>
</dbReference>
<dbReference type="SMR" id="C1DC84"/>
<dbReference type="STRING" id="557598.LHK_00508"/>
<dbReference type="KEGG" id="lhk:LHK_00508"/>
<dbReference type="eggNOG" id="COG0150">
    <property type="taxonomic scope" value="Bacteria"/>
</dbReference>
<dbReference type="HOGENOM" id="CLU_047116_0_0_4"/>
<dbReference type="UniPathway" id="UPA00074">
    <property type="reaction ID" value="UER00129"/>
</dbReference>
<dbReference type="Proteomes" id="UP000002010">
    <property type="component" value="Chromosome"/>
</dbReference>
<dbReference type="GO" id="GO:0005829">
    <property type="term" value="C:cytosol"/>
    <property type="evidence" value="ECO:0007669"/>
    <property type="project" value="TreeGrafter"/>
</dbReference>
<dbReference type="GO" id="GO:0005524">
    <property type="term" value="F:ATP binding"/>
    <property type="evidence" value="ECO:0007669"/>
    <property type="project" value="UniProtKB-KW"/>
</dbReference>
<dbReference type="GO" id="GO:0004637">
    <property type="term" value="F:phosphoribosylamine-glycine ligase activity"/>
    <property type="evidence" value="ECO:0007669"/>
    <property type="project" value="TreeGrafter"/>
</dbReference>
<dbReference type="GO" id="GO:0004641">
    <property type="term" value="F:phosphoribosylformylglycinamidine cyclo-ligase activity"/>
    <property type="evidence" value="ECO:0007669"/>
    <property type="project" value="UniProtKB-UniRule"/>
</dbReference>
<dbReference type="GO" id="GO:0006189">
    <property type="term" value="P:'de novo' IMP biosynthetic process"/>
    <property type="evidence" value="ECO:0007669"/>
    <property type="project" value="UniProtKB-UniRule"/>
</dbReference>
<dbReference type="GO" id="GO:0046084">
    <property type="term" value="P:adenine biosynthetic process"/>
    <property type="evidence" value="ECO:0007669"/>
    <property type="project" value="TreeGrafter"/>
</dbReference>
<dbReference type="CDD" id="cd02196">
    <property type="entry name" value="PurM"/>
    <property type="match status" value="1"/>
</dbReference>
<dbReference type="FunFam" id="3.30.1330.10:FF:000001">
    <property type="entry name" value="Phosphoribosylformylglycinamidine cyclo-ligase"/>
    <property type="match status" value="1"/>
</dbReference>
<dbReference type="FunFam" id="3.90.650.10:FF:000001">
    <property type="entry name" value="Phosphoribosylformylglycinamidine cyclo-ligase"/>
    <property type="match status" value="1"/>
</dbReference>
<dbReference type="Gene3D" id="3.90.650.10">
    <property type="entry name" value="PurM-like C-terminal domain"/>
    <property type="match status" value="1"/>
</dbReference>
<dbReference type="Gene3D" id="3.30.1330.10">
    <property type="entry name" value="PurM-like, N-terminal domain"/>
    <property type="match status" value="1"/>
</dbReference>
<dbReference type="HAMAP" id="MF_00741">
    <property type="entry name" value="AIRS"/>
    <property type="match status" value="1"/>
</dbReference>
<dbReference type="InterPro" id="IPR010918">
    <property type="entry name" value="PurM-like_C_dom"/>
</dbReference>
<dbReference type="InterPro" id="IPR036676">
    <property type="entry name" value="PurM-like_C_sf"/>
</dbReference>
<dbReference type="InterPro" id="IPR016188">
    <property type="entry name" value="PurM-like_N"/>
</dbReference>
<dbReference type="InterPro" id="IPR036921">
    <property type="entry name" value="PurM-like_N_sf"/>
</dbReference>
<dbReference type="InterPro" id="IPR004733">
    <property type="entry name" value="PurM_cligase"/>
</dbReference>
<dbReference type="NCBIfam" id="TIGR00878">
    <property type="entry name" value="purM"/>
    <property type="match status" value="1"/>
</dbReference>
<dbReference type="PANTHER" id="PTHR10520:SF12">
    <property type="entry name" value="TRIFUNCTIONAL PURINE BIOSYNTHETIC PROTEIN ADENOSINE-3"/>
    <property type="match status" value="1"/>
</dbReference>
<dbReference type="PANTHER" id="PTHR10520">
    <property type="entry name" value="TRIFUNCTIONAL PURINE BIOSYNTHETIC PROTEIN ADENOSINE-3-RELATED"/>
    <property type="match status" value="1"/>
</dbReference>
<dbReference type="Pfam" id="PF00586">
    <property type="entry name" value="AIRS"/>
    <property type="match status" value="1"/>
</dbReference>
<dbReference type="Pfam" id="PF02769">
    <property type="entry name" value="AIRS_C"/>
    <property type="match status" value="1"/>
</dbReference>
<dbReference type="SUPFAM" id="SSF56042">
    <property type="entry name" value="PurM C-terminal domain-like"/>
    <property type="match status" value="1"/>
</dbReference>
<dbReference type="SUPFAM" id="SSF55326">
    <property type="entry name" value="PurM N-terminal domain-like"/>
    <property type="match status" value="1"/>
</dbReference>
<accession>C1DC84</accession>
<gene>
    <name evidence="1" type="primary">purM</name>
    <name type="ordered locus">LHK_00508</name>
</gene>
<evidence type="ECO:0000255" key="1">
    <source>
        <dbReference type="HAMAP-Rule" id="MF_00741"/>
    </source>
</evidence>
<keyword id="KW-0067">ATP-binding</keyword>
<keyword id="KW-0963">Cytoplasm</keyword>
<keyword id="KW-0436">Ligase</keyword>
<keyword id="KW-0547">Nucleotide-binding</keyword>
<keyword id="KW-0658">Purine biosynthesis</keyword>
<keyword id="KW-1185">Reference proteome</keyword>
<proteinExistence type="inferred from homology"/>
<name>PUR5_LARHH</name>
<reference key="1">
    <citation type="journal article" date="2009" name="PLoS Genet.">
        <title>The complete genome and proteome of Laribacter hongkongensis reveal potential mechanisms for adaptations to different temperatures and habitats.</title>
        <authorList>
            <person name="Woo P.C.Y."/>
            <person name="Lau S.K.P."/>
            <person name="Tse H."/>
            <person name="Teng J.L.L."/>
            <person name="Curreem S.O."/>
            <person name="Tsang A.K.L."/>
            <person name="Fan R.Y.Y."/>
            <person name="Wong G.K.M."/>
            <person name="Huang Y."/>
            <person name="Loman N.J."/>
            <person name="Snyder L.A.S."/>
            <person name="Cai J.J."/>
            <person name="Huang J.-D."/>
            <person name="Mak W."/>
            <person name="Pallen M.J."/>
            <person name="Lok S."/>
            <person name="Yuen K.-Y."/>
        </authorList>
    </citation>
    <scope>NUCLEOTIDE SEQUENCE [LARGE SCALE GENOMIC DNA]</scope>
    <source>
        <strain>HLHK9</strain>
    </source>
</reference>